<protein>
    <recommendedName>
        <fullName evidence="1">Type II restriction enzyme MspI</fullName>
        <shortName>R.MspI</shortName>
        <ecNumber evidence="2">3.1.21.4</ecNumber>
    </recommendedName>
    <alternativeName>
        <fullName>Endonuclease MspI</fullName>
    </alternativeName>
    <alternativeName>
        <fullName>Type-2 restriction enzyme MspI</fullName>
    </alternativeName>
</protein>
<accession>P11405</accession>
<comment type="function">
    <text evidence="1 2">A P subtype restriction enzyme that recognizes the double-stranded sequence 5'-CCGG-3' and cleaves after C-1.</text>
</comment>
<comment type="catalytic activity">
    <reaction evidence="2">
        <text>Endonucleolytic cleavage of DNA to give specific double-stranded fragments with terminal 5'-phosphates.</text>
        <dbReference type="EC" id="3.1.21.4"/>
    </reaction>
</comment>
<feature type="chain" id="PRO_0000077338" description="Type II restriction enzyme MspI">
    <location>
        <begin position="1"/>
        <end position="262"/>
    </location>
</feature>
<feature type="helix" evidence="3">
    <location>
        <begin position="4"/>
        <end position="12"/>
    </location>
</feature>
<feature type="helix" evidence="3">
    <location>
        <begin position="15"/>
        <end position="17"/>
    </location>
</feature>
<feature type="helix" evidence="3">
    <location>
        <begin position="23"/>
        <end position="41"/>
    </location>
</feature>
<feature type="helix" evidence="3">
    <location>
        <begin position="45"/>
        <end position="51"/>
    </location>
</feature>
<feature type="helix" evidence="3">
    <location>
        <begin position="57"/>
        <end position="69"/>
    </location>
</feature>
<feature type="helix" evidence="3">
    <location>
        <begin position="74"/>
        <end position="76"/>
    </location>
</feature>
<feature type="strand" evidence="3">
    <location>
        <begin position="77"/>
        <end position="84"/>
    </location>
</feature>
<feature type="strand" evidence="3">
    <location>
        <begin position="100"/>
        <end position="106"/>
    </location>
</feature>
<feature type="strand" evidence="3">
    <location>
        <begin position="111"/>
        <end position="124"/>
    </location>
</feature>
<feature type="strand" evidence="3">
    <location>
        <begin position="126"/>
        <end position="131"/>
    </location>
</feature>
<feature type="helix" evidence="3">
    <location>
        <begin position="133"/>
        <end position="140"/>
    </location>
</feature>
<feature type="helix" evidence="3">
    <location>
        <begin position="146"/>
        <end position="157"/>
    </location>
</feature>
<feature type="helix" evidence="3">
    <location>
        <begin position="165"/>
        <end position="175"/>
    </location>
</feature>
<feature type="helix" evidence="3">
    <location>
        <begin position="176"/>
        <end position="178"/>
    </location>
</feature>
<feature type="helix" evidence="3">
    <location>
        <begin position="179"/>
        <end position="188"/>
    </location>
</feature>
<feature type="strand" evidence="3">
    <location>
        <begin position="202"/>
        <end position="210"/>
    </location>
</feature>
<feature type="strand" evidence="3">
    <location>
        <begin position="213"/>
        <end position="221"/>
    </location>
</feature>
<feature type="helix" evidence="3">
    <location>
        <begin position="222"/>
        <end position="234"/>
    </location>
</feature>
<feature type="helix" evidence="3">
    <location>
        <begin position="239"/>
        <end position="242"/>
    </location>
</feature>
<feature type="strand" evidence="3">
    <location>
        <begin position="244"/>
        <end position="249"/>
    </location>
</feature>
<feature type="strand" evidence="3">
    <location>
        <begin position="252"/>
        <end position="255"/>
    </location>
</feature>
<feature type="strand" evidence="3">
    <location>
        <begin position="258"/>
        <end position="262"/>
    </location>
</feature>
<evidence type="ECO:0000303" key="1">
    <source>
    </source>
</evidence>
<evidence type="ECO:0000305" key="2">
    <source>
    </source>
</evidence>
<evidence type="ECO:0007829" key="3">
    <source>
        <dbReference type="PDB" id="1SA3"/>
    </source>
</evidence>
<keyword id="KW-0002">3D-structure</keyword>
<keyword id="KW-0255">Endonuclease</keyword>
<keyword id="KW-0378">Hydrolase</keyword>
<keyword id="KW-0540">Nuclease</keyword>
<keyword id="KW-0680">Restriction system</keyword>
<name>T2M1_MORSP</name>
<organism>
    <name type="scientific">Moraxella sp</name>
    <dbReference type="NCBI Taxonomy" id="479"/>
    <lineage>
        <taxon>Bacteria</taxon>
        <taxon>Pseudomonadati</taxon>
        <taxon>Pseudomonadota</taxon>
        <taxon>Gammaproteobacteria</taxon>
        <taxon>Moraxellales</taxon>
        <taxon>Moraxellaceae</taxon>
        <taxon>Moraxella</taxon>
    </lineage>
</organism>
<reference key="1">
    <citation type="journal article" date="1989" name="Nucleic Acids Res.">
        <title>Cloning and characterization of the genes encoding the MspI restriction modification system.</title>
        <authorList>
            <person name="Lin P.M."/>
            <person name="Lee C.H."/>
            <person name="Roberts R.J."/>
        </authorList>
    </citation>
    <scope>NUCLEOTIDE SEQUENCE [GENOMIC DNA]</scope>
    <scope>FUNCTION</scope>
    <source>
        <strain>ATCC 49670</strain>
    </source>
</reference>
<reference key="2">
    <citation type="journal article" date="2003" name="Nucleic Acids Res.">
        <title>A nomenclature for restriction enzymes, DNA methyltransferases, homing endonucleases and their genes.</title>
        <authorList>
            <person name="Roberts R.J."/>
            <person name="Belfort M."/>
            <person name="Bestor T."/>
            <person name="Bhagwat A.S."/>
            <person name="Bickle T.A."/>
            <person name="Bitinaite J."/>
            <person name="Blumenthal R.M."/>
            <person name="Degtyarev S.K."/>
            <person name="Dryden D.T."/>
            <person name="Dybvig K."/>
            <person name="Firman K."/>
            <person name="Gromova E.S."/>
            <person name="Gumport R.I."/>
            <person name="Halford S.E."/>
            <person name="Hattman S."/>
            <person name="Heitman J."/>
            <person name="Hornby D.P."/>
            <person name="Janulaitis A."/>
            <person name="Jeltsch A."/>
            <person name="Josephsen J."/>
            <person name="Kiss A."/>
            <person name="Klaenhammer T.R."/>
            <person name="Kobayashi I."/>
            <person name="Kong H."/>
            <person name="Krueger D.H."/>
            <person name="Lacks S."/>
            <person name="Marinus M.G."/>
            <person name="Miyahara M."/>
            <person name="Morgan R.D."/>
            <person name="Murray N.E."/>
            <person name="Nagaraja V."/>
            <person name="Piekarowicz A."/>
            <person name="Pingoud A."/>
            <person name="Raleigh E."/>
            <person name="Rao D.N."/>
            <person name="Reich N."/>
            <person name="Repin V.E."/>
            <person name="Selker E.U."/>
            <person name="Shaw P.C."/>
            <person name="Stein D.C."/>
            <person name="Stoddard B.L."/>
            <person name="Szybalski W."/>
            <person name="Trautner T.A."/>
            <person name="Van Etten J.L."/>
            <person name="Vitor J.M."/>
            <person name="Wilson G.G."/>
            <person name="Xu S.Y."/>
        </authorList>
    </citation>
    <scope>NOMENCLATURE</scope>
    <scope>SUBTYPE</scope>
</reference>
<proteinExistence type="evidence at protein level"/>
<sequence length="262" mass="29829">MRTELLSKLYDDFGIDQLPHTQHGVTSDRLGKLYEKYILDIFKDIESLKKYNTNAFPQEKDISSKLLKALNLDLDNIIDVSSSDTDLGRTIAGGSPKTDATIRFTFHNQSSRLVPLNIKHSSKKKVSIAEYDVETICTGVGISDGELKELIRKHQNDQSAKLFTPVQKQRLTELLEPYRERFIRWCVTLRAEKSEGNILHPDLLIRFQVIDREYVDVTIKNIDDYVSDRIAEGSKARKPGFGTGLNWTYASGSKAKKMQFKG</sequence>
<dbReference type="EC" id="3.1.21.4" evidence="2"/>
<dbReference type="EMBL" id="X14191">
    <property type="protein sequence ID" value="CAA32394.1"/>
    <property type="molecule type" value="Genomic_DNA"/>
</dbReference>
<dbReference type="PIR" id="S04187">
    <property type="entry name" value="NDKE2M"/>
</dbReference>
<dbReference type="PDB" id="1SA3">
    <property type="method" value="X-ray"/>
    <property type="resolution" value="1.95 A"/>
    <property type="chains" value="A/B=1-262"/>
</dbReference>
<dbReference type="PDB" id="1YFI">
    <property type="method" value="X-ray"/>
    <property type="resolution" value="2.70 A"/>
    <property type="chains" value="A/B=1-262"/>
</dbReference>
<dbReference type="PDBsum" id="1SA3"/>
<dbReference type="PDBsum" id="1YFI"/>
<dbReference type="SMR" id="P11405"/>
<dbReference type="REBASE" id="1277">
    <property type="entry name" value="MspI"/>
</dbReference>
<dbReference type="EvolutionaryTrace" id="P11405"/>
<dbReference type="PRO" id="PR:P11405"/>
<dbReference type="GO" id="GO:0003677">
    <property type="term" value="F:DNA binding"/>
    <property type="evidence" value="ECO:0007669"/>
    <property type="project" value="InterPro"/>
</dbReference>
<dbReference type="GO" id="GO:0009036">
    <property type="term" value="F:type II site-specific deoxyribonuclease activity"/>
    <property type="evidence" value="ECO:0007669"/>
    <property type="project" value="UniProtKB-EC"/>
</dbReference>
<dbReference type="GO" id="GO:0009307">
    <property type="term" value="P:DNA restriction-modification system"/>
    <property type="evidence" value="ECO:0007669"/>
    <property type="project" value="UniProtKB-KW"/>
</dbReference>
<dbReference type="InterPro" id="IPR011335">
    <property type="entry name" value="Restrct_endonuc-II-like"/>
</dbReference>
<dbReference type="InterPro" id="IPR015291">
    <property type="entry name" value="Restrct_endonuc_II_MspI"/>
</dbReference>
<dbReference type="Pfam" id="PF09208">
    <property type="entry name" value="Endonuc-MspI"/>
    <property type="match status" value="1"/>
</dbReference>
<dbReference type="SUPFAM" id="SSF52980">
    <property type="entry name" value="Restriction endonuclease-like"/>
    <property type="match status" value="1"/>
</dbReference>
<gene>
    <name type="primary">mspIR</name>
</gene>